<name>SODM_HALMA</name>
<dbReference type="EC" id="1.15.1.1"/>
<dbReference type="EMBL" id="M97485">
    <property type="protein sequence ID" value="AAA73374.1"/>
    <property type="molecule type" value="Genomic_DNA"/>
</dbReference>
<dbReference type="EMBL" id="AY596297">
    <property type="protein sequence ID" value="AAV45813.1"/>
    <property type="molecule type" value="Genomic_DNA"/>
</dbReference>
<dbReference type="PIR" id="T50044">
    <property type="entry name" value="T50044"/>
</dbReference>
<dbReference type="RefSeq" id="WP_004961502.1">
    <property type="nucleotide sequence ID" value="NZ_CP039138.1"/>
</dbReference>
<dbReference type="SMR" id="Q03302"/>
<dbReference type="STRING" id="272569.rrnAC0831"/>
<dbReference type="PaxDb" id="272569-rrnAC0831"/>
<dbReference type="EnsemblBacteria" id="AAV45813">
    <property type="protein sequence ID" value="AAV45813"/>
    <property type="gene ID" value="rrnAC0831"/>
</dbReference>
<dbReference type="GeneID" id="64822514"/>
<dbReference type="KEGG" id="hma:rrnAC0831"/>
<dbReference type="PATRIC" id="fig|272569.17.peg.1569"/>
<dbReference type="eggNOG" id="arCOG04147">
    <property type="taxonomic scope" value="Archaea"/>
</dbReference>
<dbReference type="HOGENOM" id="CLU_031625_2_1_2"/>
<dbReference type="Proteomes" id="UP000001169">
    <property type="component" value="Chromosome I"/>
</dbReference>
<dbReference type="GO" id="GO:0046872">
    <property type="term" value="F:metal ion binding"/>
    <property type="evidence" value="ECO:0007669"/>
    <property type="project" value="UniProtKB-KW"/>
</dbReference>
<dbReference type="GO" id="GO:0004784">
    <property type="term" value="F:superoxide dismutase activity"/>
    <property type="evidence" value="ECO:0007669"/>
    <property type="project" value="UniProtKB-EC"/>
</dbReference>
<dbReference type="FunFam" id="3.55.40.20:FF:000004">
    <property type="entry name" value="Superoxide dismutase [Fe]"/>
    <property type="match status" value="1"/>
</dbReference>
<dbReference type="Gene3D" id="1.10.287.990">
    <property type="entry name" value="Fe,Mn superoxide dismutase (SOD) domain"/>
    <property type="match status" value="1"/>
</dbReference>
<dbReference type="Gene3D" id="3.55.40.20">
    <property type="entry name" value="Iron/manganese superoxide dismutase, C-terminal domain"/>
    <property type="match status" value="1"/>
</dbReference>
<dbReference type="InterPro" id="IPR050265">
    <property type="entry name" value="Fe/Mn_Superoxide_Dismutase"/>
</dbReference>
<dbReference type="InterPro" id="IPR001189">
    <property type="entry name" value="Mn/Fe_SOD"/>
</dbReference>
<dbReference type="InterPro" id="IPR019833">
    <property type="entry name" value="Mn/Fe_SOD_BS"/>
</dbReference>
<dbReference type="InterPro" id="IPR019832">
    <property type="entry name" value="Mn/Fe_SOD_C"/>
</dbReference>
<dbReference type="InterPro" id="IPR019831">
    <property type="entry name" value="Mn/Fe_SOD_N"/>
</dbReference>
<dbReference type="InterPro" id="IPR036324">
    <property type="entry name" value="Mn/Fe_SOD_N_sf"/>
</dbReference>
<dbReference type="InterPro" id="IPR036314">
    <property type="entry name" value="SOD_C_sf"/>
</dbReference>
<dbReference type="InterPro" id="IPR054865">
    <property type="entry name" value="Superox_dis_Halo"/>
</dbReference>
<dbReference type="NCBIfam" id="NF041312">
    <property type="entry name" value="Superox_dis_Halo"/>
    <property type="match status" value="1"/>
</dbReference>
<dbReference type="PANTHER" id="PTHR11404">
    <property type="entry name" value="SUPEROXIDE DISMUTASE 2"/>
    <property type="match status" value="1"/>
</dbReference>
<dbReference type="PANTHER" id="PTHR11404:SF6">
    <property type="entry name" value="SUPEROXIDE DISMUTASE [MN], MITOCHONDRIAL"/>
    <property type="match status" value="1"/>
</dbReference>
<dbReference type="Pfam" id="PF02777">
    <property type="entry name" value="Sod_Fe_C"/>
    <property type="match status" value="1"/>
</dbReference>
<dbReference type="Pfam" id="PF00081">
    <property type="entry name" value="Sod_Fe_N"/>
    <property type="match status" value="1"/>
</dbReference>
<dbReference type="PIRSF" id="PIRSF000349">
    <property type="entry name" value="SODismutase"/>
    <property type="match status" value="1"/>
</dbReference>
<dbReference type="PRINTS" id="PR01703">
    <property type="entry name" value="MNSODISMTASE"/>
</dbReference>
<dbReference type="SUPFAM" id="SSF54719">
    <property type="entry name" value="Fe,Mn superoxide dismutase (SOD), C-terminal domain"/>
    <property type="match status" value="1"/>
</dbReference>
<dbReference type="SUPFAM" id="SSF46609">
    <property type="entry name" value="Fe,Mn superoxide dismutase (SOD), N-terminal domain"/>
    <property type="match status" value="1"/>
</dbReference>
<dbReference type="PROSITE" id="PS00088">
    <property type="entry name" value="SOD_MN"/>
    <property type="match status" value="1"/>
</dbReference>
<accession>Q03302</accession>
<accession>Q5V3T9</accession>
<feature type="chain" id="PRO_0000160113" description="Superoxide dismutase [Mn]">
    <location>
        <begin position="1"/>
        <end position="203"/>
    </location>
</feature>
<feature type="binding site" evidence="1">
    <location>
        <position position="31"/>
    </location>
    <ligand>
        <name>Mn(2+)</name>
        <dbReference type="ChEBI" id="CHEBI:29035"/>
    </ligand>
</feature>
<feature type="binding site" evidence="1">
    <location>
        <position position="79"/>
    </location>
    <ligand>
        <name>Mn(2+)</name>
        <dbReference type="ChEBI" id="CHEBI:29035"/>
    </ligand>
</feature>
<feature type="binding site" evidence="1">
    <location>
        <position position="161"/>
    </location>
    <ligand>
        <name>Mn(2+)</name>
        <dbReference type="ChEBI" id="CHEBI:29035"/>
    </ligand>
</feature>
<feature type="binding site" evidence="1">
    <location>
        <position position="165"/>
    </location>
    <ligand>
        <name>Mn(2+)</name>
        <dbReference type="ChEBI" id="CHEBI:29035"/>
    </ligand>
</feature>
<feature type="sequence conflict" description="In Ref. 1; AAA73374." evidence="2" ref="1">
    <original>MG</original>
    <variation>WV</variation>
    <location>
        <begin position="66"/>
        <end position="67"/>
    </location>
</feature>
<feature type="sequence conflict" description="In Ref. 1; AAA73374." evidence="2" ref="1">
    <original>HY</original>
    <variation>QD</variation>
    <location>
        <begin position="76"/>
        <end position="77"/>
    </location>
</feature>
<feature type="sequence conflict" description="In Ref. 1; AAA73374." evidence="2" ref="1">
    <original>V</original>
    <variation>C</variation>
    <location>
        <position position="134"/>
    </location>
</feature>
<evidence type="ECO:0000250" key="1"/>
<evidence type="ECO:0000305" key="2"/>
<gene>
    <name type="primary">sod</name>
    <name type="synonym">sodA</name>
    <name type="ordered locus">rrnAC0831</name>
</gene>
<reference key="1">
    <citation type="journal article" date="1993" name="J. Bacteriol.">
        <title>Characterization of paralogous and orthologous members of the superoxide dismutase gene family from genera of the halophilic archaebacteria.</title>
        <authorList>
            <person name="Joshi P.B."/>
            <person name="Dennis P.P."/>
        </authorList>
    </citation>
    <scope>NUCLEOTIDE SEQUENCE [GENOMIC DNA]</scope>
</reference>
<reference key="2">
    <citation type="journal article" date="2004" name="Genome Res.">
        <title>Genome sequence of Haloarcula marismortui: a halophilic archaeon from the Dead Sea.</title>
        <authorList>
            <person name="Baliga N.S."/>
            <person name="Bonneau R."/>
            <person name="Facciotti M.T."/>
            <person name="Pan M."/>
            <person name="Glusman G."/>
            <person name="Deutsch E.W."/>
            <person name="Shannon P."/>
            <person name="Chiu Y."/>
            <person name="Weng R.S."/>
            <person name="Gan R.R."/>
            <person name="Hung P."/>
            <person name="Date S.V."/>
            <person name="Marcotte E."/>
            <person name="Hood L."/>
            <person name="Ng W.V."/>
        </authorList>
    </citation>
    <scope>NUCLEOTIDE SEQUENCE [LARGE SCALE GENOMIC DNA]</scope>
    <source>
        <strain>ATCC 43049 / DSM 3752 / JCM 8966 / VKM B-1809</strain>
    </source>
</reference>
<proteinExistence type="inferred from homology"/>
<organism>
    <name type="scientific">Haloarcula marismortui (strain ATCC 43049 / DSM 3752 / JCM 8966 / VKM B-1809)</name>
    <name type="common">Halobacterium marismortui</name>
    <dbReference type="NCBI Taxonomy" id="272569"/>
    <lineage>
        <taxon>Archaea</taxon>
        <taxon>Methanobacteriati</taxon>
        <taxon>Methanobacteriota</taxon>
        <taxon>Stenosarchaea group</taxon>
        <taxon>Halobacteria</taxon>
        <taxon>Halobacteriales</taxon>
        <taxon>Haloarculaceae</taxon>
        <taxon>Haloarcula</taxon>
    </lineage>
</organism>
<protein>
    <recommendedName>
        <fullName>Superoxide dismutase [Mn]</fullName>
        <ecNumber>1.15.1.1</ecNumber>
    </recommendedName>
</protein>
<comment type="function">
    <text>Destroys superoxide anion radicals which are normally produced within the cells and which are toxic to biological systems.</text>
</comment>
<comment type="catalytic activity">
    <reaction>
        <text>2 superoxide + 2 H(+) = H2O2 + O2</text>
        <dbReference type="Rhea" id="RHEA:20696"/>
        <dbReference type="ChEBI" id="CHEBI:15378"/>
        <dbReference type="ChEBI" id="CHEBI:15379"/>
        <dbReference type="ChEBI" id="CHEBI:16240"/>
        <dbReference type="ChEBI" id="CHEBI:18421"/>
        <dbReference type="EC" id="1.15.1.1"/>
    </reaction>
</comment>
<comment type="cofactor">
    <cofactor evidence="1">
        <name>Mn(2+)</name>
        <dbReference type="ChEBI" id="CHEBI:29035"/>
    </cofactor>
    <text evidence="1">Binds 1 Mn(2+) ion per subunit.</text>
</comment>
<comment type="similarity">
    <text evidence="2">Belongs to the iron/manganese superoxide dismutase family.</text>
</comment>
<sequence>MSEHSNPELPPLPYDYDALEPHISEQVLTWHHDTHHQGYVNGLESAEETLAENRDAGDFGSSAAAMGNVTHNGCGHYLHTLFWENMDPNGGGEPEGELLDRIEEDFGSYEGWKGEFEAAASAAGGWALLVYDPVAKQLRNVPVDKHDQGALWGSHPILALDVWEHSYYYDYGPARGDFIDAFFEVVDWDKAAEEYEKSVSHFE</sequence>
<keyword id="KW-0464">Manganese</keyword>
<keyword id="KW-0479">Metal-binding</keyword>
<keyword id="KW-0560">Oxidoreductase</keyword>
<keyword id="KW-1185">Reference proteome</keyword>